<reference key="1">
    <citation type="journal article" date="2008" name="Proc. Natl. Acad. Sci. U.S.A.">
        <title>Niche adaptation and genome expansion in the chlorophyll d-producing cyanobacterium Acaryochloris marina.</title>
        <authorList>
            <person name="Swingley W.D."/>
            <person name="Chen M."/>
            <person name="Cheung P.C."/>
            <person name="Conrad A.L."/>
            <person name="Dejesa L.C."/>
            <person name="Hao J."/>
            <person name="Honchak B.M."/>
            <person name="Karbach L.E."/>
            <person name="Kurdoglu A."/>
            <person name="Lahiri S."/>
            <person name="Mastrian S.D."/>
            <person name="Miyashita H."/>
            <person name="Page L."/>
            <person name="Ramakrishna P."/>
            <person name="Satoh S."/>
            <person name="Sattley W.M."/>
            <person name="Shimada Y."/>
            <person name="Taylor H.L."/>
            <person name="Tomo T."/>
            <person name="Tsuchiya T."/>
            <person name="Wang Z.T."/>
            <person name="Raymond J."/>
            <person name="Mimuro M."/>
            <person name="Blankenship R.E."/>
            <person name="Touchman J.W."/>
        </authorList>
    </citation>
    <scope>NUCLEOTIDE SEQUENCE [LARGE SCALE GENOMIC DNA]</scope>
    <source>
        <strain>MBIC 11017</strain>
    </source>
</reference>
<dbReference type="EC" id="6.3.5.-" evidence="1"/>
<dbReference type="EMBL" id="CP000828">
    <property type="protein sequence ID" value="ABW25982.1"/>
    <property type="molecule type" value="Genomic_DNA"/>
</dbReference>
<dbReference type="RefSeq" id="WP_012161547.1">
    <property type="nucleotide sequence ID" value="NC_009925.1"/>
</dbReference>
<dbReference type="SMR" id="B0BZQ6"/>
<dbReference type="STRING" id="329726.AM1_0940"/>
<dbReference type="KEGG" id="amr:AM1_0940"/>
<dbReference type="eggNOG" id="COG0064">
    <property type="taxonomic scope" value="Bacteria"/>
</dbReference>
<dbReference type="HOGENOM" id="CLU_019240_0_0_3"/>
<dbReference type="OrthoDB" id="9804078at2"/>
<dbReference type="Proteomes" id="UP000000268">
    <property type="component" value="Chromosome"/>
</dbReference>
<dbReference type="GO" id="GO:0050566">
    <property type="term" value="F:asparaginyl-tRNA synthase (glutamine-hydrolyzing) activity"/>
    <property type="evidence" value="ECO:0007669"/>
    <property type="project" value="RHEA"/>
</dbReference>
<dbReference type="GO" id="GO:0005524">
    <property type="term" value="F:ATP binding"/>
    <property type="evidence" value="ECO:0007669"/>
    <property type="project" value="UniProtKB-KW"/>
</dbReference>
<dbReference type="GO" id="GO:0050567">
    <property type="term" value="F:glutaminyl-tRNA synthase (glutamine-hydrolyzing) activity"/>
    <property type="evidence" value="ECO:0007669"/>
    <property type="project" value="UniProtKB-UniRule"/>
</dbReference>
<dbReference type="GO" id="GO:0070681">
    <property type="term" value="P:glutaminyl-tRNAGln biosynthesis via transamidation"/>
    <property type="evidence" value="ECO:0007669"/>
    <property type="project" value="TreeGrafter"/>
</dbReference>
<dbReference type="GO" id="GO:0006412">
    <property type="term" value="P:translation"/>
    <property type="evidence" value="ECO:0007669"/>
    <property type="project" value="UniProtKB-UniRule"/>
</dbReference>
<dbReference type="FunFam" id="1.10.10.410:FF:000001">
    <property type="entry name" value="Aspartyl/glutamyl-tRNA(Asn/Gln) amidotransferase subunit B"/>
    <property type="match status" value="1"/>
</dbReference>
<dbReference type="FunFam" id="1.10.150.380:FF:000001">
    <property type="entry name" value="Aspartyl/glutamyl-tRNA(Asn/Gln) amidotransferase subunit B"/>
    <property type="match status" value="1"/>
</dbReference>
<dbReference type="Gene3D" id="1.10.10.410">
    <property type="match status" value="1"/>
</dbReference>
<dbReference type="Gene3D" id="1.10.150.380">
    <property type="entry name" value="GatB domain, N-terminal subdomain"/>
    <property type="match status" value="1"/>
</dbReference>
<dbReference type="HAMAP" id="MF_00121">
    <property type="entry name" value="GatB"/>
    <property type="match status" value="1"/>
</dbReference>
<dbReference type="InterPro" id="IPR017959">
    <property type="entry name" value="Asn/Gln-tRNA_amidoTrfase_suB/E"/>
</dbReference>
<dbReference type="InterPro" id="IPR006075">
    <property type="entry name" value="Asn/Gln-tRNA_Trfase_suB/E_cat"/>
</dbReference>
<dbReference type="InterPro" id="IPR018027">
    <property type="entry name" value="Asn/Gln_amidotransferase"/>
</dbReference>
<dbReference type="InterPro" id="IPR003789">
    <property type="entry name" value="Asn/Gln_tRNA_amidoTrase-B-like"/>
</dbReference>
<dbReference type="InterPro" id="IPR004413">
    <property type="entry name" value="GatB"/>
</dbReference>
<dbReference type="InterPro" id="IPR042114">
    <property type="entry name" value="GatB_C_1"/>
</dbReference>
<dbReference type="InterPro" id="IPR023168">
    <property type="entry name" value="GatB_Yqey_C_2"/>
</dbReference>
<dbReference type="InterPro" id="IPR017958">
    <property type="entry name" value="Gln-tRNA_amidoTrfase_suB_CS"/>
</dbReference>
<dbReference type="InterPro" id="IPR014746">
    <property type="entry name" value="Gln_synth/guanido_kin_cat_dom"/>
</dbReference>
<dbReference type="NCBIfam" id="TIGR00133">
    <property type="entry name" value="gatB"/>
    <property type="match status" value="1"/>
</dbReference>
<dbReference type="NCBIfam" id="NF004012">
    <property type="entry name" value="PRK05477.1-2"/>
    <property type="match status" value="1"/>
</dbReference>
<dbReference type="NCBIfam" id="NF004014">
    <property type="entry name" value="PRK05477.1-4"/>
    <property type="match status" value="1"/>
</dbReference>
<dbReference type="PANTHER" id="PTHR11659">
    <property type="entry name" value="GLUTAMYL-TRNA GLN AMIDOTRANSFERASE SUBUNIT B MITOCHONDRIAL AND PROKARYOTIC PET112-RELATED"/>
    <property type="match status" value="1"/>
</dbReference>
<dbReference type="PANTHER" id="PTHR11659:SF0">
    <property type="entry name" value="GLUTAMYL-TRNA(GLN) AMIDOTRANSFERASE SUBUNIT B, MITOCHONDRIAL"/>
    <property type="match status" value="1"/>
</dbReference>
<dbReference type="Pfam" id="PF02934">
    <property type="entry name" value="GatB_N"/>
    <property type="match status" value="1"/>
</dbReference>
<dbReference type="Pfam" id="PF02637">
    <property type="entry name" value="GatB_Yqey"/>
    <property type="match status" value="1"/>
</dbReference>
<dbReference type="SMART" id="SM00845">
    <property type="entry name" value="GatB_Yqey"/>
    <property type="match status" value="1"/>
</dbReference>
<dbReference type="SUPFAM" id="SSF89095">
    <property type="entry name" value="GatB/YqeY motif"/>
    <property type="match status" value="1"/>
</dbReference>
<dbReference type="SUPFAM" id="SSF55931">
    <property type="entry name" value="Glutamine synthetase/guanido kinase"/>
    <property type="match status" value="1"/>
</dbReference>
<dbReference type="PROSITE" id="PS01234">
    <property type="entry name" value="GATB"/>
    <property type="match status" value="1"/>
</dbReference>
<feature type="chain" id="PRO_1000076148" description="Aspartyl/glutamyl-tRNA(Asn/Gln) amidotransferase subunit B">
    <location>
        <begin position="1"/>
        <end position="494"/>
    </location>
</feature>
<feature type="region of interest" description="Disordered" evidence="2">
    <location>
        <begin position="475"/>
        <end position="494"/>
    </location>
</feature>
<keyword id="KW-0067">ATP-binding</keyword>
<keyword id="KW-0436">Ligase</keyword>
<keyword id="KW-0547">Nucleotide-binding</keyword>
<keyword id="KW-0648">Protein biosynthesis</keyword>
<keyword id="KW-1185">Reference proteome</keyword>
<organism>
    <name type="scientific">Acaryochloris marina (strain MBIC 11017)</name>
    <dbReference type="NCBI Taxonomy" id="329726"/>
    <lineage>
        <taxon>Bacteria</taxon>
        <taxon>Bacillati</taxon>
        <taxon>Cyanobacteriota</taxon>
        <taxon>Cyanophyceae</taxon>
        <taxon>Acaryochloridales</taxon>
        <taxon>Acaryochloridaceae</taxon>
        <taxon>Acaryochloris</taxon>
    </lineage>
</organism>
<evidence type="ECO:0000255" key="1">
    <source>
        <dbReference type="HAMAP-Rule" id="MF_00121"/>
    </source>
</evidence>
<evidence type="ECO:0000256" key="2">
    <source>
        <dbReference type="SAM" id="MobiDB-lite"/>
    </source>
</evidence>
<name>GATB_ACAM1</name>
<gene>
    <name evidence="1" type="primary">gatB</name>
    <name type="ordered locus">AM1_0940</name>
</gene>
<comment type="function">
    <text evidence="1">Allows the formation of correctly charged Asn-tRNA(Asn) or Gln-tRNA(Gln) through the transamidation of misacylated Asp-tRNA(Asn) or Glu-tRNA(Gln) in organisms which lack either or both of asparaginyl-tRNA or glutaminyl-tRNA synthetases. The reaction takes place in the presence of glutamine and ATP through an activated phospho-Asp-tRNA(Asn) or phospho-Glu-tRNA(Gln).</text>
</comment>
<comment type="catalytic activity">
    <reaction evidence="1">
        <text>L-glutamyl-tRNA(Gln) + L-glutamine + ATP + H2O = L-glutaminyl-tRNA(Gln) + L-glutamate + ADP + phosphate + H(+)</text>
        <dbReference type="Rhea" id="RHEA:17521"/>
        <dbReference type="Rhea" id="RHEA-COMP:9681"/>
        <dbReference type="Rhea" id="RHEA-COMP:9684"/>
        <dbReference type="ChEBI" id="CHEBI:15377"/>
        <dbReference type="ChEBI" id="CHEBI:15378"/>
        <dbReference type="ChEBI" id="CHEBI:29985"/>
        <dbReference type="ChEBI" id="CHEBI:30616"/>
        <dbReference type="ChEBI" id="CHEBI:43474"/>
        <dbReference type="ChEBI" id="CHEBI:58359"/>
        <dbReference type="ChEBI" id="CHEBI:78520"/>
        <dbReference type="ChEBI" id="CHEBI:78521"/>
        <dbReference type="ChEBI" id="CHEBI:456216"/>
    </reaction>
</comment>
<comment type="catalytic activity">
    <reaction evidence="1">
        <text>L-aspartyl-tRNA(Asn) + L-glutamine + ATP + H2O = L-asparaginyl-tRNA(Asn) + L-glutamate + ADP + phosphate + 2 H(+)</text>
        <dbReference type="Rhea" id="RHEA:14513"/>
        <dbReference type="Rhea" id="RHEA-COMP:9674"/>
        <dbReference type="Rhea" id="RHEA-COMP:9677"/>
        <dbReference type="ChEBI" id="CHEBI:15377"/>
        <dbReference type="ChEBI" id="CHEBI:15378"/>
        <dbReference type="ChEBI" id="CHEBI:29985"/>
        <dbReference type="ChEBI" id="CHEBI:30616"/>
        <dbReference type="ChEBI" id="CHEBI:43474"/>
        <dbReference type="ChEBI" id="CHEBI:58359"/>
        <dbReference type="ChEBI" id="CHEBI:78515"/>
        <dbReference type="ChEBI" id="CHEBI:78516"/>
        <dbReference type="ChEBI" id="CHEBI:456216"/>
    </reaction>
</comment>
<comment type="subunit">
    <text evidence="1">Heterotrimer of A, B and C subunits.</text>
</comment>
<comment type="similarity">
    <text evidence="1">Belongs to the GatB/GatE family. GatB subfamily.</text>
</comment>
<sequence length="494" mass="54949">MVTKAPAKTEYEAVIGLETHCQLSTKTKIFCNCSTAFGADPNHQVCSICMGMPGVLPVLNETVLEYAVKAGRALNCEIAKYSKFDRKQYFYPDLPKNYQVSQFDLPIAEHGWLEVEIVDEQGEATRKKIGITRLHMEEDAGKLVHGGSDRLAGSTHSLVDFNRTGIPLIEIVSEPDMRTGLEAAEYAQEIRRIVRYLGVSDGNMQEGSLRCDVNISVRPRGQKEFGTKVEIKNMNSFSAIHRAIDYEIARQIEAIETGEPIIQETRLWEEGAQRTIGMRSKEGSSDYRYFPEPDLTPIEVAPSLLKQWQSELPELPAAKRHRYEEEIGLSPYDTRILTDDHAITQYFEATLKAGASAKQAANWLMGDITGYLNNESLSITDIALTPEALAELIELIEANTISGKIAKELLPELLTKGGSPKKLVKKKGLTQISDAATLESLIDEVLAAHPQELEQYRNGKTKLQGFFMGQVMKRTSGRADPKATNQMLAKKLKG</sequence>
<accession>B0BZQ6</accession>
<proteinExistence type="inferred from homology"/>
<protein>
    <recommendedName>
        <fullName evidence="1">Aspartyl/glutamyl-tRNA(Asn/Gln) amidotransferase subunit B</fullName>
        <shortName evidence="1">Asp/Glu-ADT subunit B</shortName>
        <ecNumber evidence="1">6.3.5.-</ecNumber>
    </recommendedName>
</protein>